<name>TX1A_TLIAL</name>
<dbReference type="SMR" id="P0DUC0"/>
<dbReference type="GO" id="GO:0005576">
    <property type="term" value="C:extracellular region"/>
    <property type="evidence" value="ECO:0007669"/>
    <property type="project" value="UniProtKB-SubCell"/>
</dbReference>
<dbReference type="GO" id="GO:0019871">
    <property type="term" value="F:sodium channel inhibitor activity"/>
    <property type="evidence" value="ECO:0007669"/>
    <property type="project" value="InterPro"/>
</dbReference>
<dbReference type="GO" id="GO:0090729">
    <property type="term" value="F:toxin activity"/>
    <property type="evidence" value="ECO:0007669"/>
    <property type="project" value="UniProtKB-KW"/>
</dbReference>
<dbReference type="InterPro" id="IPR012627">
    <property type="entry name" value="Toxin_22"/>
</dbReference>
<dbReference type="Pfam" id="PF08092">
    <property type="entry name" value="Toxin_22"/>
    <property type="match status" value="1"/>
</dbReference>
<keyword id="KW-0027">Amidation</keyword>
<keyword id="KW-0165">Cleavage on pair of basic residues</keyword>
<keyword id="KW-0903">Direct protein sequencing</keyword>
<keyword id="KW-1015">Disulfide bond</keyword>
<keyword id="KW-0872">Ion channel impairing toxin</keyword>
<keyword id="KW-0960">Knottin</keyword>
<keyword id="KW-0528">Neurotoxin</keyword>
<keyword id="KW-0964">Secreted</keyword>
<keyword id="KW-0732">Signal</keyword>
<keyword id="KW-0800">Toxin</keyword>
<sequence>MNTIQVIIFAVVLVLTVTVGQADEDSAETSLLRKLKEAEASLFGQHLEESQHSREKRCLGENVPCDKDRPNCCSRYECLEPTGYGWWYASYYCYKKRSG</sequence>
<protein>
    <recommendedName>
        <fullName evidence="4">U1-theraphotoxin-Tal1a</fullName>
        <shortName evidence="4">U1-TRTX-Tal1a</shortName>
    </recommendedName>
    <alternativeName>
        <fullName evidence="3">Brachyin</fullName>
    </alternativeName>
</protein>
<feature type="signal peptide" evidence="1">
    <location>
        <begin position="1"/>
        <end position="22"/>
    </location>
</feature>
<feature type="propeptide" id="PRO_0000451469" evidence="5">
    <location>
        <begin position="23"/>
        <end position="57"/>
    </location>
</feature>
<feature type="chain" id="PRO_0000451470" description="U1-theraphotoxin-Tal1a" evidence="2">
    <location>
        <begin position="58"/>
        <end position="98"/>
    </location>
</feature>
<feature type="modified residue" description="Serine amide" evidence="2">
    <location>
        <position position="98"/>
    </location>
</feature>
<feature type="disulfide bond" evidence="4">
    <location>
        <begin position="58"/>
        <end position="73"/>
    </location>
</feature>
<feature type="disulfide bond" evidence="4">
    <location>
        <begin position="65"/>
        <end position="78"/>
    </location>
</feature>
<feature type="disulfide bond" evidence="4">
    <location>
        <begin position="72"/>
        <end position="93"/>
    </location>
</feature>
<proteinExistence type="evidence at protein level"/>
<evidence type="ECO:0000255" key="1"/>
<evidence type="ECO:0000269" key="2">
    <source>
    </source>
</evidence>
<evidence type="ECO:0000303" key="3">
    <source>
    </source>
</evidence>
<evidence type="ECO:0000305" key="4"/>
<evidence type="ECO:0000305" key="5">
    <source>
    </source>
</evidence>
<organism>
    <name type="scientific">Tliltocatl albopilosus</name>
    <name type="common">Curlyhair tarantula</name>
    <name type="synonym">Brachypelma albopilosum</name>
    <dbReference type="NCBI Taxonomy" id="351119"/>
    <lineage>
        <taxon>Eukaryota</taxon>
        <taxon>Metazoa</taxon>
        <taxon>Ecdysozoa</taxon>
        <taxon>Arthropoda</taxon>
        <taxon>Chelicerata</taxon>
        <taxon>Arachnida</taxon>
        <taxon>Araneae</taxon>
        <taxon>Mygalomorphae</taxon>
        <taxon>Theraphosidae</taxon>
        <taxon>Brachypelma</taxon>
    </lineage>
</organism>
<accession>P0DUC0</accession>
<comment type="function">
    <text evidence="2 4">Insecticidal toxin that shows strong lethal effects on American cockroaches (P.americana) and common mealbeetle (T.molitor) (PubMed:25329070). Possibly acts by blocking ion channel currents (Probable). Also shows significant analgesic effects in mice models of pain including abdominal writhing induced by acetic acid and formalin-induced paw licking tests (PubMed:25329070). In addition, exerts marked inhibition of proliferation of some human tumor cell lines including C8166, Molt-4, A-549, BIU-87, T24, and Calu-6 (PubMed:25329070).</text>
</comment>
<comment type="subcellular location">
    <subcellularLocation>
        <location evidence="2">Secreted</location>
    </subcellularLocation>
</comment>
<comment type="tissue specificity">
    <text evidence="5">Expressed by the venom gland.</text>
</comment>
<comment type="domain">
    <text evidence="4">The presence of a 'disulfide through disulfide knot' structurally defines this protein as a knottin.</text>
</comment>
<comment type="mass spectrometry"/>
<comment type="toxic dose">
    <text evidence="2">LD(50) is 5 ug/kg in adult cockroaches.</text>
</comment>
<comment type="toxic dose">
    <text evidence="2">LD(50) is 7.6 ug/kg in mealbeetles.</text>
</comment>
<comment type="similarity">
    <text evidence="4">Belongs to the neurotoxin 14 (magi-1) family. 08 (Ltx-4) subfamily.</text>
</comment>
<reference key="1">
    <citation type="journal article" date="2014" name="PLoS ONE">
        <title>A novel neurotoxin from venom of the spider, Brachypelma albopilosum.</title>
        <authorList>
            <person name="Zhong Y."/>
            <person name="Song B."/>
            <person name="Mo G."/>
            <person name="Yuan M."/>
            <person name="Li H."/>
            <person name="Wang P."/>
            <person name="Yuan M."/>
            <person name="Lu Q."/>
        </authorList>
    </citation>
    <scope>NUCLEOTIDE SEQUENCE [MRNA]</scope>
    <scope>PROTEIN SEQUENCE OF 58-98</scope>
    <scope>FUNCTION</scope>
    <scope>AMIDATION AT SER-98</scope>
    <scope>SUBCELLULAR LOCATION</scope>
    <scope>MASS SPECTROMETRY</scope>
    <scope>TOXIC DOSE</scope>
    <source>
        <tissue>Venom</tissue>
    </source>
</reference>